<organism>
    <name type="scientific">Human adenovirus C serotype 2</name>
    <name type="common">HAdV-2</name>
    <name type="synonym">Human adenovirus 2</name>
    <dbReference type="NCBI Taxonomy" id="10515"/>
    <lineage>
        <taxon>Viruses</taxon>
        <taxon>Varidnaviria</taxon>
        <taxon>Bamfordvirae</taxon>
        <taxon>Preplasmiviricota</taxon>
        <taxon>Tectiliviricetes</taxon>
        <taxon>Rowavirales</taxon>
        <taxon>Adenoviridae</taxon>
        <taxon>Mastadenovirus</taxon>
        <taxon>Human mastadenovirus C</taxon>
    </lineage>
</organism>
<feature type="initiator methionine" description="Removed; by host" evidence="2">
    <location>
        <position position="1"/>
    </location>
</feature>
<feature type="chain" id="PRO_0000421077" description="Pre-core protein X">
    <location>
        <begin position="2"/>
        <end position="80"/>
    </location>
</feature>
<feature type="propeptide" id="PRO_0000036519">
    <location>
        <begin position="2"/>
        <end position="32"/>
    </location>
</feature>
<feature type="peptide" id="PRO_0000036520" description="Core protein X">
    <location>
        <begin position="33"/>
        <end position="51"/>
    </location>
</feature>
<feature type="propeptide" id="PRO_0000036521">
    <location>
        <begin position="52"/>
        <end position="80"/>
    </location>
</feature>
<feature type="region of interest" description="Disordered" evidence="1">
    <location>
        <begin position="18"/>
        <end position="45"/>
    </location>
</feature>
<feature type="compositionally biased region" description="Basic residues" evidence="1">
    <location>
        <begin position="34"/>
        <end position="45"/>
    </location>
</feature>
<feature type="site" description="Cleavage; by viral protease">
    <location>
        <begin position="32"/>
        <end position="33"/>
    </location>
</feature>
<feature type="site" description="Cleavage; by viral protease">
    <location>
        <begin position="51"/>
        <end position="52"/>
    </location>
</feature>
<reference key="1">
    <citation type="journal article" date="1979" name="Cell">
        <title>Nucleotide sequence analysis of the leader segments in a cloned copy of adenovirus 2 fiber mRNA.</title>
        <authorList>
            <person name="Zain S."/>
            <person name="Sambrook J."/>
            <person name="Roberts R.J."/>
            <person name="Keller W."/>
            <person name="Fried M."/>
            <person name="Dunn A.R."/>
        </authorList>
    </citation>
    <scope>NUCLEOTIDE SEQUENCE [GENOMIC DNA]</scope>
</reference>
<reference key="2">
    <citation type="journal article" date="1984" name="J. Biol. Chem.">
        <title>Genes encoding the core proteins of adenovirus type 2.</title>
        <authorList>
            <person name="Alestroem P."/>
            <person name="Akusjaervi G."/>
            <person name="Lager M."/>
            <person name="Yeh-kai L."/>
            <person name="Pettersson U."/>
        </authorList>
    </citation>
    <scope>NUCLEOTIDE SEQUENCE [GENOMIC DNA]</scope>
</reference>
<reference key="3">
    <citation type="journal article" date="1988" name="J. Virol.">
        <title>Identification of the gene coding for the precursor of adenovirus core protein X.</title>
        <authorList>
            <person name="Weber J.M."/>
            <person name="Anderson C.W."/>
        </authorList>
    </citation>
    <scope>PROTEIN SEQUENCE OF 2-57</scope>
</reference>
<reference key="4">
    <citation type="journal article" date="1985" name="J. Virol.">
        <title>Interactions among the three adenovirus core proteins.</title>
        <authorList>
            <person name="Chatterjee P.K."/>
            <person name="Vayda M.E."/>
            <person name="Flint S.J."/>
        </authorList>
    </citation>
    <scope>INTERACTION WITH CORE-CAPSID BRIDGING PROTEIN</scope>
</reference>
<reference key="5">
    <citation type="journal article" date="2002" name="Biochemistry">
        <title>Biophysical characterization of the DNA binding and condensing properties of adenoviral core peptide mu.</title>
        <authorList>
            <person name="Keller M."/>
            <person name="Tagawa T."/>
            <person name="Preuss M."/>
            <person name="Miller A.D."/>
        </authorList>
    </citation>
    <scope>DNA-BINDING</scope>
</reference>
<reference key="6">
    <citation type="journal article" date="2004" name="J. Gen. Virol.">
        <title>Precursor of human adenovirus core polypeptide Mu targets the nucleolus and modulates the expression of E2 proteins.</title>
        <authorList>
            <person name="Lee T.W."/>
            <person name="Lawrence F.J."/>
            <person name="Dauksaite V."/>
            <person name="Akusjarvi G."/>
            <person name="Blair G.E."/>
            <person name="Matthews D.A."/>
        </authorList>
    </citation>
    <scope>SUBCELLULAR LOCATION OF PRE-CORE PROTEIN X</scope>
</reference>
<reference key="7">
    <citation type="journal article" date="2012" name="Viruses">
        <title>Latest insights on adenovirus structure and assembly.</title>
        <authorList>
            <person name="San Martin C."/>
        </authorList>
    </citation>
    <scope>REVIEW</scope>
</reference>
<reference key="8">
    <citation type="journal article" date="2012" name="Nucleic Acids Res.">
        <title>Chromatin structure of adenovirus DNA throughout infection.</title>
        <authorList>
            <person name="Giberson A.N."/>
            <person name="Davidson A.R."/>
            <person name="Parks R.J."/>
        </authorList>
    </citation>
    <scope>REVIEW</scope>
</reference>
<evidence type="ECO:0000256" key="1">
    <source>
        <dbReference type="SAM" id="MobiDB-lite"/>
    </source>
</evidence>
<evidence type="ECO:0000269" key="2">
    <source>
    </source>
</evidence>
<evidence type="ECO:0000269" key="3">
    <source>
    </source>
</evidence>
<evidence type="ECO:0000305" key="4"/>
<name>COR10_ADE02</name>
<protein>
    <recommendedName>
        <fullName>Pre-core protein X</fullName>
        <shortName>pX</shortName>
    </recommendedName>
    <alternativeName>
        <fullName>11 kDa core protein</fullName>
    </alternativeName>
    <alternativeName>
        <fullName>Protein mu</fullName>
        <shortName>pMu</shortName>
    </alternativeName>
    <component>
        <recommendedName>
            <fullName>Core protein X</fullName>
        </recommendedName>
    </component>
</protein>
<dbReference type="EMBL" id="J01917">
    <property type="status" value="NOT_ANNOTATED_CDS"/>
    <property type="molecule type" value="Genomic_DNA"/>
</dbReference>
<dbReference type="PIR" id="D03837">
    <property type="entry name" value="WMADH2"/>
</dbReference>
<dbReference type="RefSeq" id="AP_000173.1">
    <property type="nucleotide sequence ID" value="AC_000007.1"/>
</dbReference>
<dbReference type="Proteomes" id="UP000008167">
    <property type="component" value="Segment"/>
</dbReference>
<dbReference type="GO" id="GO:0044196">
    <property type="term" value="C:host cell nucleolus"/>
    <property type="evidence" value="ECO:0007669"/>
    <property type="project" value="UniProtKB-SubCell"/>
</dbReference>
<dbReference type="GO" id="GO:0019013">
    <property type="term" value="C:viral nucleocapsid"/>
    <property type="evidence" value="ECO:0007669"/>
    <property type="project" value="InterPro"/>
</dbReference>
<dbReference type="GO" id="GO:0003677">
    <property type="term" value="F:DNA binding"/>
    <property type="evidence" value="ECO:0007669"/>
    <property type="project" value="UniProtKB-KW"/>
</dbReference>
<dbReference type="InterPro" id="IPR008393">
    <property type="entry name" value="Adenovirus_late_L2_mu_core"/>
</dbReference>
<dbReference type="Pfam" id="PF05829">
    <property type="entry name" value="Adeno_PX"/>
    <property type="match status" value="1"/>
</dbReference>
<proteinExistence type="evidence at protein level"/>
<gene>
    <name type="ORF">L2</name>
</gene>
<sequence>MALTCRLRFPVPGFRGRMHRRRGMAGHGLTGGMRRAHHRRRRASHRRMRGGILPLLIPLIAAAIGAVPGIASVALQAQRH</sequence>
<keyword id="KW-0903">Direct protein sequencing</keyword>
<keyword id="KW-0238">DNA-binding</keyword>
<keyword id="KW-1048">Host nucleus</keyword>
<keyword id="KW-0426">Late protein</keyword>
<keyword id="KW-1185">Reference proteome</keyword>
<keyword id="KW-0946">Virion</keyword>
<comment type="function">
    <molecule>Pre-core protein X</molecule>
    <text>Interacts with the viral DNA and aids in tightly condensing it within the capsid. Cleavage of pre-core protein X may serve to partially relax this structure within the mature virion prior to its entry into the nucleus.</text>
</comment>
<comment type="subunit">
    <text evidence="3">Interacts with the core-capsid bridging protein; this interaction bridges the virus core to the capsid.</text>
</comment>
<comment type="subcellular location">
    <molecule>Pre-core protein X</molecule>
    <subcellularLocation>
        <location>Host nucleus</location>
        <location>Host nucleolus</location>
    </subcellularLocation>
    <text>Excluded from adenovirus DNA-binding protein (DBP)-rich replication centers in adenovirus-infected cells.</text>
</comment>
<comment type="subcellular location">
    <molecule>Core protein X</molecule>
    <subcellularLocation>
        <location>Virion</location>
    </subcellularLocation>
    <text>Located inside the capsid in association with the viral DNA (core). Present in about 126-160 copies per virion. Excluded from adenovirus DNA-binding protein (DBP)-rich replication centers in adenovirus-infected cells.</text>
</comment>
<comment type="induction">
    <text>Expressed in the late phase of the viral replicative cycle.</text>
</comment>
<comment type="PTM">
    <text>Cleaved by the viral protease during virion maturation to form the mature protein.</text>
</comment>
<comment type="miscellaneous">
    <text>All late proteins expressed from the major late promoter are produced by alternative splicing and alternative polyadenylation of the same gene giving rise to non-overlapping ORFs. A leader sequence is present in the N-terminus of all these mRNAs and is recognized by the viral shutoff protein to provide expression although conventional translation via ribosome scanning from the cap has been shut off in the host cell.</text>
</comment>
<comment type="similarity">
    <text evidence="4">Belongs to the adenoviridae core protein X family.</text>
</comment>
<accession>P14269</accession>
<organismHost>
    <name type="scientific">Homo sapiens</name>
    <name type="common">Human</name>
    <dbReference type="NCBI Taxonomy" id="9606"/>
</organismHost>